<evidence type="ECO:0000250" key="1">
    <source>
        <dbReference type="UniProtKB" id="P19624"/>
    </source>
</evidence>
<evidence type="ECO:0000250" key="2">
    <source>
        <dbReference type="UniProtKB" id="P58718"/>
    </source>
</evidence>
<evidence type="ECO:0000305" key="3"/>
<reference key="1">
    <citation type="journal article" date="2002" name="Nucleic Acids Res.">
        <title>Genome sequence of Oceanobacillus iheyensis isolated from the Iheya Ridge and its unexpected adaptive capabilities to extreme environments.</title>
        <authorList>
            <person name="Takami H."/>
            <person name="Takaki Y."/>
            <person name="Uchiyama I."/>
        </authorList>
    </citation>
    <scope>NUCLEOTIDE SEQUENCE [LARGE SCALE GENOMIC DNA]</scope>
    <source>
        <strain>DSM 14371 / CIP 107618 / JCM 11309 / KCTC 3954 / HTE831</strain>
    </source>
</reference>
<organism>
    <name type="scientific">Oceanobacillus iheyensis (strain DSM 14371 / CIP 107618 / JCM 11309 / KCTC 3954 / HTE831)</name>
    <dbReference type="NCBI Taxonomy" id="221109"/>
    <lineage>
        <taxon>Bacteria</taxon>
        <taxon>Bacillati</taxon>
        <taxon>Bacillota</taxon>
        <taxon>Bacilli</taxon>
        <taxon>Bacillales</taxon>
        <taxon>Bacillaceae</taxon>
        <taxon>Oceanobacillus</taxon>
    </lineage>
</organism>
<keyword id="KW-0119">Carbohydrate metabolism</keyword>
<keyword id="KW-0479">Metal-binding</keyword>
<keyword id="KW-0520">NAD</keyword>
<keyword id="KW-0560">Oxidoreductase</keyword>
<keyword id="KW-1185">Reference proteome</keyword>
<sequence>MSKKPIIGITMGDAAGVGPEIIIKSLRNRELYEQAHPIVIGDTKMLERAAKILDVDVSFDKKTKDEELMDTEFGKITCIDLDILPEDLAYGEVSPVSGNAAFEYLRMAIELANEGKIQAICTAPLNKEALQKGGHMYPGHTEILAELTNTEEFSMMLSSPKLKVIHVTTHVGLIQAIQMIKPERVHKVIQLAHETLSNSGIKNPKIGVCGINPHAGENGLFGNGEEEEKIIPAIQQAVKEGINVEGPLPADTLFFRAQRGDFDIVVAMYHDQGHGPIKVLGLEAGVNITVGLPIIRTSVDHGTAFDIAGKGIVDERSMLEALHQAIELAPTK</sequence>
<dbReference type="EC" id="1.1.1.408" evidence="2"/>
<dbReference type="EMBL" id="BA000028">
    <property type="protein sequence ID" value="BAC12969.1"/>
    <property type="molecule type" value="Genomic_DNA"/>
</dbReference>
<dbReference type="RefSeq" id="WP_011065416.1">
    <property type="nucleotide sequence ID" value="NC_004193.1"/>
</dbReference>
<dbReference type="SMR" id="Q8CUU4"/>
<dbReference type="STRING" id="221109.gene:10733251"/>
<dbReference type="KEGG" id="oih:OB1013"/>
<dbReference type="eggNOG" id="COG1995">
    <property type="taxonomic scope" value="Bacteria"/>
</dbReference>
<dbReference type="HOGENOM" id="CLU_040168_1_0_9"/>
<dbReference type="OrthoDB" id="9801783at2"/>
<dbReference type="PhylomeDB" id="Q8CUU4"/>
<dbReference type="Proteomes" id="UP000000822">
    <property type="component" value="Chromosome"/>
</dbReference>
<dbReference type="GO" id="GO:0046872">
    <property type="term" value="F:metal ion binding"/>
    <property type="evidence" value="ECO:0007669"/>
    <property type="project" value="UniProtKB-KW"/>
</dbReference>
<dbReference type="GO" id="GO:0051287">
    <property type="term" value="F:NAD binding"/>
    <property type="evidence" value="ECO:0007669"/>
    <property type="project" value="InterPro"/>
</dbReference>
<dbReference type="GO" id="GO:0016491">
    <property type="term" value="F:oxidoreductase activity"/>
    <property type="evidence" value="ECO:0007669"/>
    <property type="project" value="UniProtKB-KW"/>
</dbReference>
<dbReference type="Gene3D" id="3.40.718.10">
    <property type="entry name" value="Isopropylmalate Dehydrogenase"/>
    <property type="match status" value="1"/>
</dbReference>
<dbReference type="InterPro" id="IPR005255">
    <property type="entry name" value="PdxA_fam"/>
</dbReference>
<dbReference type="NCBIfam" id="TIGR00557">
    <property type="entry name" value="pdxA"/>
    <property type="match status" value="1"/>
</dbReference>
<dbReference type="PANTHER" id="PTHR30004">
    <property type="entry name" value="4-HYDROXYTHREONINE-4-PHOSPHATE DEHYDROGENASE"/>
    <property type="match status" value="1"/>
</dbReference>
<dbReference type="PANTHER" id="PTHR30004:SF6">
    <property type="entry name" value="D-THREONATE 4-PHOSPHATE DEHYDROGENASE"/>
    <property type="match status" value="1"/>
</dbReference>
<dbReference type="Pfam" id="PF04166">
    <property type="entry name" value="PdxA"/>
    <property type="match status" value="1"/>
</dbReference>
<dbReference type="SUPFAM" id="SSF53659">
    <property type="entry name" value="Isocitrate/Isopropylmalate dehydrogenase-like"/>
    <property type="match status" value="1"/>
</dbReference>
<protein>
    <recommendedName>
        <fullName evidence="2">Putative D-threonate 4-phosphate dehydrogenase</fullName>
        <ecNumber evidence="2">1.1.1.408</ecNumber>
    </recommendedName>
</protein>
<comment type="function">
    <text evidence="2">Catalyzes the NAD-dependent oxidation and subsequent decarboxylation of D-threonate 4-phosphate to produce dihydroxyacetone phosphate (DHAP).</text>
</comment>
<comment type="catalytic activity">
    <reaction evidence="2">
        <text>4-O-phospho-D-threonate + NAD(+) = dihydroxyacetone phosphate + CO2 + NADH</text>
        <dbReference type="Rhea" id="RHEA:52396"/>
        <dbReference type="ChEBI" id="CHEBI:16526"/>
        <dbReference type="ChEBI" id="CHEBI:57540"/>
        <dbReference type="ChEBI" id="CHEBI:57642"/>
        <dbReference type="ChEBI" id="CHEBI:57945"/>
        <dbReference type="ChEBI" id="CHEBI:136590"/>
        <dbReference type="EC" id="1.1.1.408"/>
    </reaction>
</comment>
<comment type="cofactor">
    <cofactor evidence="1">
        <name>a divalent metal cation</name>
        <dbReference type="ChEBI" id="CHEBI:60240"/>
    </cofactor>
    <text evidence="1">Binds 1 divalent metal cation per subunit.</text>
</comment>
<comment type="subunit">
    <text evidence="2">Homodimer.</text>
</comment>
<comment type="similarity">
    <text evidence="3">Belongs to the PdxA family. PdxA2 subfamily.</text>
</comment>
<gene>
    <name type="ordered locus">OB1013</name>
</gene>
<name>PDXA2_OCEIH</name>
<feature type="chain" id="PRO_0000188813" description="Putative D-threonate 4-phosphate dehydrogenase">
    <location>
        <begin position="1"/>
        <end position="332"/>
    </location>
</feature>
<feature type="binding site" evidence="1">
    <location>
        <position position="140"/>
    </location>
    <ligand>
        <name>substrate</name>
    </ligand>
</feature>
<feature type="binding site" evidence="1">
    <location>
        <position position="141"/>
    </location>
    <ligand>
        <name>substrate</name>
    </ligand>
</feature>
<feature type="binding site" evidence="1">
    <location>
        <position position="170"/>
    </location>
    <ligand>
        <name>a divalent metal cation</name>
        <dbReference type="ChEBI" id="CHEBI:60240"/>
        <note>ligand shared between dimeric partners</note>
    </ligand>
</feature>
<feature type="binding site" evidence="1">
    <location>
        <position position="214"/>
    </location>
    <ligand>
        <name>a divalent metal cation</name>
        <dbReference type="ChEBI" id="CHEBI:60240"/>
        <note>ligand shared between dimeric partners</note>
    </ligand>
</feature>
<feature type="binding site" evidence="1">
    <location>
        <position position="270"/>
    </location>
    <ligand>
        <name>a divalent metal cation</name>
        <dbReference type="ChEBI" id="CHEBI:60240"/>
        <note>ligand shared between dimeric partners</note>
    </ligand>
</feature>
<feature type="binding site" evidence="1">
    <location>
        <position position="278"/>
    </location>
    <ligand>
        <name>substrate</name>
    </ligand>
</feature>
<feature type="binding site" evidence="1">
    <location>
        <position position="287"/>
    </location>
    <ligand>
        <name>substrate</name>
    </ligand>
</feature>
<feature type="binding site" evidence="1">
    <location>
        <position position="296"/>
    </location>
    <ligand>
        <name>substrate</name>
    </ligand>
</feature>
<accession>Q8CUU4</accession>
<proteinExistence type="inferred from homology"/>